<dbReference type="EMBL" id="AE015450">
    <property type="protein sequence ID" value="AAP56882.2"/>
    <property type="molecule type" value="Genomic_DNA"/>
</dbReference>
<dbReference type="RefSeq" id="WP_011113786.1">
    <property type="nucleotide sequence ID" value="NC_004829.2"/>
</dbReference>
<dbReference type="SMR" id="Q7NAV3"/>
<dbReference type="KEGG" id="mga:MGA_0260"/>
<dbReference type="PATRIC" id="fig|233150.7.peg.600"/>
<dbReference type="HOGENOM" id="CLU_002794_4_1_14"/>
<dbReference type="OrthoDB" id="9804431at2"/>
<dbReference type="Proteomes" id="UP000001418">
    <property type="component" value="Chromosome"/>
</dbReference>
<dbReference type="GO" id="GO:0005737">
    <property type="term" value="C:cytoplasm"/>
    <property type="evidence" value="ECO:0007669"/>
    <property type="project" value="UniProtKB-SubCell"/>
</dbReference>
<dbReference type="GO" id="GO:0005525">
    <property type="term" value="F:GTP binding"/>
    <property type="evidence" value="ECO:0007669"/>
    <property type="project" value="UniProtKB-UniRule"/>
</dbReference>
<dbReference type="GO" id="GO:0003924">
    <property type="term" value="F:GTPase activity"/>
    <property type="evidence" value="ECO:0007669"/>
    <property type="project" value="InterPro"/>
</dbReference>
<dbReference type="GO" id="GO:0003746">
    <property type="term" value="F:translation elongation factor activity"/>
    <property type="evidence" value="ECO:0007669"/>
    <property type="project" value="UniProtKB-UniRule"/>
</dbReference>
<dbReference type="GO" id="GO:0032790">
    <property type="term" value="P:ribosome disassembly"/>
    <property type="evidence" value="ECO:0007669"/>
    <property type="project" value="TreeGrafter"/>
</dbReference>
<dbReference type="CDD" id="cd01886">
    <property type="entry name" value="EF-G"/>
    <property type="match status" value="1"/>
</dbReference>
<dbReference type="CDD" id="cd16262">
    <property type="entry name" value="EFG_III"/>
    <property type="match status" value="1"/>
</dbReference>
<dbReference type="CDD" id="cd01434">
    <property type="entry name" value="EFG_mtEFG1_IV"/>
    <property type="match status" value="1"/>
</dbReference>
<dbReference type="CDD" id="cd03713">
    <property type="entry name" value="EFG_mtEFG_C"/>
    <property type="match status" value="1"/>
</dbReference>
<dbReference type="CDD" id="cd04088">
    <property type="entry name" value="EFG_mtEFG_II"/>
    <property type="match status" value="1"/>
</dbReference>
<dbReference type="FunFam" id="2.40.30.10:FF:000006">
    <property type="entry name" value="Elongation factor G"/>
    <property type="match status" value="1"/>
</dbReference>
<dbReference type="FunFam" id="3.30.230.10:FF:000003">
    <property type="entry name" value="Elongation factor G"/>
    <property type="match status" value="1"/>
</dbReference>
<dbReference type="FunFam" id="3.30.70.240:FF:000001">
    <property type="entry name" value="Elongation factor G"/>
    <property type="match status" value="1"/>
</dbReference>
<dbReference type="FunFam" id="3.30.70.870:FF:000001">
    <property type="entry name" value="Elongation factor G"/>
    <property type="match status" value="1"/>
</dbReference>
<dbReference type="FunFam" id="3.40.50.300:FF:000029">
    <property type="entry name" value="Elongation factor G"/>
    <property type="match status" value="1"/>
</dbReference>
<dbReference type="Gene3D" id="3.30.230.10">
    <property type="match status" value="1"/>
</dbReference>
<dbReference type="Gene3D" id="3.30.70.240">
    <property type="match status" value="1"/>
</dbReference>
<dbReference type="Gene3D" id="3.30.70.870">
    <property type="entry name" value="Elongation Factor G (Translational Gtpase), domain 3"/>
    <property type="match status" value="1"/>
</dbReference>
<dbReference type="Gene3D" id="3.40.50.300">
    <property type="entry name" value="P-loop containing nucleotide triphosphate hydrolases"/>
    <property type="match status" value="1"/>
</dbReference>
<dbReference type="Gene3D" id="2.40.30.10">
    <property type="entry name" value="Translation factors"/>
    <property type="match status" value="1"/>
</dbReference>
<dbReference type="HAMAP" id="MF_00054_B">
    <property type="entry name" value="EF_G_EF_2_B"/>
    <property type="match status" value="1"/>
</dbReference>
<dbReference type="InterPro" id="IPR041095">
    <property type="entry name" value="EFG_II"/>
</dbReference>
<dbReference type="InterPro" id="IPR009022">
    <property type="entry name" value="EFG_III"/>
</dbReference>
<dbReference type="InterPro" id="IPR035647">
    <property type="entry name" value="EFG_III/V"/>
</dbReference>
<dbReference type="InterPro" id="IPR047872">
    <property type="entry name" value="EFG_IV"/>
</dbReference>
<dbReference type="InterPro" id="IPR035649">
    <property type="entry name" value="EFG_V"/>
</dbReference>
<dbReference type="InterPro" id="IPR000640">
    <property type="entry name" value="EFG_V-like"/>
</dbReference>
<dbReference type="InterPro" id="IPR004161">
    <property type="entry name" value="EFTu-like_2"/>
</dbReference>
<dbReference type="InterPro" id="IPR031157">
    <property type="entry name" value="G_TR_CS"/>
</dbReference>
<dbReference type="InterPro" id="IPR027417">
    <property type="entry name" value="P-loop_NTPase"/>
</dbReference>
<dbReference type="InterPro" id="IPR020568">
    <property type="entry name" value="Ribosomal_Su5_D2-typ_SF"/>
</dbReference>
<dbReference type="InterPro" id="IPR014721">
    <property type="entry name" value="Ribsml_uS5_D2-typ_fold_subgr"/>
</dbReference>
<dbReference type="InterPro" id="IPR005225">
    <property type="entry name" value="Small_GTP-bd"/>
</dbReference>
<dbReference type="InterPro" id="IPR000795">
    <property type="entry name" value="T_Tr_GTP-bd_dom"/>
</dbReference>
<dbReference type="InterPro" id="IPR009000">
    <property type="entry name" value="Transl_B-barrel_sf"/>
</dbReference>
<dbReference type="InterPro" id="IPR004540">
    <property type="entry name" value="Transl_elong_EFG/EF2"/>
</dbReference>
<dbReference type="InterPro" id="IPR005517">
    <property type="entry name" value="Transl_elong_EFG/EF2_IV"/>
</dbReference>
<dbReference type="NCBIfam" id="TIGR00484">
    <property type="entry name" value="EF-G"/>
    <property type="match status" value="1"/>
</dbReference>
<dbReference type="NCBIfam" id="NF009379">
    <property type="entry name" value="PRK12740.1-3"/>
    <property type="match status" value="1"/>
</dbReference>
<dbReference type="NCBIfam" id="NF009381">
    <property type="entry name" value="PRK12740.1-5"/>
    <property type="match status" value="1"/>
</dbReference>
<dbReference type="NCBIfam" id="NF009891">
    <property type="entry name" value="PRK13351.1-1"/>
    <property type="match status" value="1"/>
</dbReference>
<dbReference type="NCBIfam" id="TIGR00231">
    <property type="entry name" value="small_GTP"/>
    <property type="match status" value="1"/>
</dbReference>
<dbReference type="PANTHER" id="PTHR43261:SF1">
    <property type="entry name" value="RIBOSOME-RELEASING FACTOR 2, MITOCHONDRIAL"/>
    <property type="match status" value="1"/>
</dbReference>
<dbReference type="PANTHER" id="PTHR43261">
    <property type="entry name" value="TRANSLATION ELONGATION FACTOR G-RELATED"/>
    <property type="match status" value="1"/>
</dbReference>
<dbReference type="Pfam" id="PF00679">
    <property type="entry name" value="EFG_C"/>
    <property type="match status" value="1"/>
</dbReference>
<dbReference type="Pfam" id="PF14492">
    <property type="entry name" value="EFG_III"/>
    <property type="match status" value="1"/>
</dbReference>
<dbReference type="Pfam" id="PF03764">
    <property type="entry name" value="EFG_IV"/>
    <property type="match status" value="1"/>
</dbReference>
<dbReference type="Pfam" id="PF00009">
    <property type="entry name" value="GTP_EFTU"/>
    <property type="match status" value="1"/>
</dbReference>
<dbReference type="Pfam" id="PF03144">
    <property type="entry name" value="GTP_EFTU_D2"/>
    <property type="match status" value="1"/>
</dbReference>
<dbReference type="PRINTS" id="PR00315">
    <property type="entry name" value="ELONGATNFCT"/>
</dbReference>
<dbReference type="SMART" id="SM00838">
    <property type="entry name" value="EFG_C"/>
    <property type="match status" value="1"/>
</dbReference>
<dbReference type="SMART" id="SM00889">
    <property type="entry name" value="EFG_IV"/>
    <property type="match status" value="1"/>
</dbReference>
<dbReference type="SUPFAM" id="SSF54980">
    <property type="entry name" value="EF-G C-terminal domain-like"/>
    <property type="match status" value="2"/>
</dbReference>
<dbReference type="SUPFAM" id="SSF52540">
    <property type="entry name" value="P-loop containing nucleoside triphosphate hydrolases"/>
    <property type="match status" value="1"/>
</dbReference>
<dbReference type="SUPFAM" id="SSF54211">
    <property type="entry name" value="Ribosomal protein S5 domain 2-like"/>
    <property type="match status" value="1"/>
</dbReference>
<dbReference type="SUPFAM" id="SSF50447">
    <property type="entry name" value="Translation proteins"/>
    <property type="match status" value="1"/>
</dbReference>
<dbReference type="PROSITE" id="PS00301">
    <property type="entry name" value="G_TR_1"/>
    <property type="match status" value="1"/>
</dbReference>
<dbReference type="PROSITE" id="PS51722">
    <property type="entry name" value="G_TR_2"/>
    <property type="match status" value="1"/>
</dbReference>
<comment type="function">
    <text evidence="1">Catalyzes the GTP-dependent ribosomal translocation step during translation elongation. During this step, the ribosome changes from the pre-translocational (PRE) to the post-translocational (POST) state as the newly formed A-site-bound peptidyl-tRNA and P-site-bound deacylated tRNA move to the P and E sites, respectively. Catalyzes the coordinated movement of the two tRNA molecules, the mRNA and conformational changes in the ribosome.</text>
</comment>
<comment type="subcellular location">
    <subcellularLocation>
        <location evidence="1">Cytoplasm</location>
    </subcellularLocation>
</comment>
<comment type="similarity">
    <text evidence="1">Belongs to the TRAFAC class translation factor GTPase superfamily. Classic translation factor GTPase family. EF-G/EF-2 subfamily.</text>
</comment>
<organism>
    <name type="scientific">Mycoplasmoides gallisepticum (strain R(low / passage 15 / clone 2))</name>
    <name type="common">Mycoplasma gallisepticum</name>
    <dbReference type="NCBI Taxonomy" id="710127"/>
    <lineage>
        <taxon>Bacteria</taxon>
        <taxon>Bacillati</taxon>
        <taxon>Mycoplasmatota</taxon>
        <taxon>Mycoplasmoidales</taxon>
        <taxon>Mycoplasmoidaceae</taxon>
        <taxon>Mycoplasmoides</taxon>
    </lineage>
</organism>
<sequence>MARQYPLEKFRNFGIMAHIDAGKTTTSERILFHSGKTHKIGETHDGASVMDWMAQEKERGITITSAATSVTWKDCQLNLIDTPGHVDFTVEVERSLRVLDGAVAVLDAQMGVEPQTETVWRQASRYEVPRIVFVNKMDKTGANFQRSVDSIHSRLGVKSVPIQLPIGAENDFVGIIDLVEMKAYFFDGGENENYETKEIPAEYLEEAKKAHNHMLDEIVTFDEAVMEKYLDGQEISKAEIKSCIRKGVVSSTLFPVLCGTAFKNKGVKPLLDAVVDYLPSPIDVPPAKGYKVGEEVQIPTSDDAPFVGLAFKVATDPFVGRLTFVRVYSGILTSGSYVINTTKDKKERVSRIVKMHAQQRDEINEIRAGDICAIVGLKDTTTGDTIASENQNLTLESMTFAQPVISLAVEPKTKADQEKMGISLSKLAEEDPTFRTYTDEETGQTIIAGMGELHLDILVDRLRREFKVDVNVGAPQVSYRETLKAKADVEGKYIKQSGGRGQYGHVVITFEPNHDKGFEFEDKIVGGKIPKEYIKSVKAGLEAAMNNGPLAGYPMIDIKASLFDGSYHDVDSNEMAYKIAASMALKEAGKRCKPALLEPIMAIEVTVPEQYFGDTMGDISSRRGMIEGTESRDNVQVIKAKVPLSEMFGYATDLRSFTQGRGNYIMQFSHYAEAPKSVVEKVIEDKAKKNKTA</sequence>
<reference key="1">
    <citation type="journal article" date="2003" name="Microbiology">
        <title>The complete genome sequence of the avian pathogen Mycoplasma gallisepticum strain R(low).</title>
        <authorList>
            <person name="Papazisi L."/>
            <person name="Gorton T.S."/>
            <person name="Kutish G."/>
            <person name="Markham P.F."/>
            <person name="Browning G.F."/>
            <person name="Nguyen D.K."/>
            <person name="Swartzell S."/>
            <person name="Madan A."/>
            <person name="Mahairas G."/>
            <person name="Geary S.J."/>
        </authorList>
    </citation>
    <scope>NUCLEOTIDE SEQUENCE [LARGE SCALE GENOMIC DNA]</scope>
    <source>
        <strain>R(low / passage 15 / clone 2)</strain>
    </source>
</reference>
<evidence type="ECO:0000255" key="1">
    <source>
        <dbReference type="HAMAP-Rule" id="MF_00054"/>
    </source>
</evidence>
<feature type="chain" id="PRO_0000091155" description="Elongation factor G">
    <location>
        <begin position="1"/>
        <end position="693"/>
    </location>
</feature>
<feature type="domain" description="tr-type G">
    <location>
        <begin position="8"/>
        <end position="282"/>
    </location>
</feature>
<feature type="binding site" evidence="1">
    <location>
        <begin position="17"/>
        <end position="24"/>
    </location>
    <ligand>
        <name>GTP</name>
        <dbReference type="ChEBI" id="CHEBI:37565"/>
    </ligand>
</feature>
<feature type="binding site" evidence="1">
    <location>
        <begin position="81"/>
        <end position="85"/>
    </location>
    <ligand>
        <name>GTP</name>
        <dbReference type="ChEBI" id="CHEBI:37565"/>
    </ligand>
</feature>
<feature type="binding site" evidence="1">
    <location>
        <begin position="135"/>
        <end position="138"/>
    </location>
    <ligand>
        <name>GTP</name>
        <dbReference type="ChEBI" id="CHEBI:37565"/>
    </ligand>
</feature>
<proteinExistence type="inferred from homology"/>
<keyword id="KW-0963">Cytoplasm</keyword>
<keyword id="KW-0251">Elongation factor</keyword>
<keyword id="KW-0342">GTP-binding</keyword>
<keyword id="KW-0547">Nucleotide-binding</keyword>
<keyword id="KW-0648">Protein biosynthesis</keyword>
<keyword id="KW-1185">Reference proteome</keyword>
<name>EFG_MYCGA</name>
<accession>Q7NAV3</accession>
<protein>
    <recommendedName>
        <fullName evidence="1">Elongation factor G</fullName>
        <shortName evidence="1">EF-G</shortName>
    </recommendedName>
</protein>
<gene>
    <name evidence="1" type="primary">fusA</name>
    <name type="ordered locus">MYCGA5320</name>
    <name type="ORF">MGA_0260</name>
</gene>